<comment type="function">
    <text evidence="3 4">E2-like enzyme required for the cytoplasm to vacuole transport (Cvt), autophagy and nucleophagy. Acts as an E2-like enzyme that catalyzes the conjugation of ATG12 to ATG5. ATG12 conjugation to ATG5 is required for proper localization of ATG8 to the preautophagosomal structure (PAS). Likely serves as an ATG5-recognition molecule.</text>
</comment>
<comment type="subunit">
    <text>Forms homooligomers. Interacts with ATG7 and ATG12.</text>
</comment>
<comment type="subcellular location">
    <subcellularLocation>
        <location evidence="2">Cytoplasm</location>
    </subcellularLocation>
    <subcellularLocation>
        <location evidence="2">Nucleus</location>
    </subcellularLocation>
    <subcellularLocation>
        <location evidence="2">Preautophagosomal structure membrane</location>
        <topology evidence="2">Peripheral membrane protein</topology>
    </subcellularLocation>
</comment>
<comment type="similarity">
    <text evidence="5">Belongs to the ATG10 family.</text>
</comment>
<proteinExistence type="inferred from homology"/>
<dbReference type="EC" id="2.3.2.-"/>
<dbReference type="EMBL" id="CU329670">
    <property type="protein sequence ID" value="CAB61453.1"/>
    <property type="molecule type" value="Genomic_DNA"/>
</dbReference>
<dbReference type="PIR" id="T50160">
    <property type="entry name" value="T50160"/>
</dbReference>
<dbReference type="RefSeq" id="NP_592958.1">
    <property type="nucleotide sequence ID" value="NM_001018358.2"/>
</dbReference>
<dbReference type="BioGRID" id="278403">
    <property type="interactions" value="12"/>
</dbReference>
<dbReference type="STRING" id="284812.Q9UTD5"/>
<dbReference type="PaxDb" id="4896-SPAC227.04.1"/>
<dbReference type="EnsemblFungi" id="SPAC227.04.1">
    <property type="protein sequence ID" value="SPAC227.04.1:pep"/>
    <property type="gene ID" value="SPAC227.04"/>
</dbReference>
<dbReference type="GeneID" id="2541913"/>
<dbReference type="KEGG" id="spo:2541913"/>
<dbReference type="PomBase" id="SPAC227.04"/>
<dbReference type="VEuPathDB" id="FungiDB:SPAC227.04"/>
<dbReference type="eggNOG" id="ENOG502SBNV">
    <property type="taxonomic scope" value="Eukaryota"/>
</dbReference>
<dbReference type="HOGENOM" id="CLU_1469036_0_0_1"/>
<dbReference type="InParanoid" id="Q9UTD5"/>
<dbReference type="OMA" id="AWIRFSP"/>
<dbReference type="PRO" id="PR:Q9UTD5"/>
<dbReference type="Proteomes" id="UP000002485">
    <property type="component" value="Chromosome I"/>
</dbReference>
<dbReference type="GO" id="GO:0005829">
    <property type="term" value="C:cytosol"/>
    <property type="evidence" value="ECO:0007005"/>
    <property type="project" value="PomBase"/>
</dbReference>
<dbReference type="GO" id="GO:0005634">
    <property type="term" value="C:nucleus"/>
    <property type="evidence" value="ECO:0007005"/>
    <property type="project" value="PomBase"/>
</dbReference>
<dbReference type="GO" id="GO:0034045">
    <property type="term" value="C:phagophore assembly site membrane"/>
    <property type="evidence" value="ECO:0007669"/>
    <property type="project" value="UniProtKB-SubCell"/>
</dbReference>
<dbReference type="GO" id="GO:0061651">
    <property type="term" value="F:Atg12 conjugating enzyme activity"/>
    <property type="evidence" value="ECO:0000318"/>
    <property type="project" value="GO_Central"/>
</dbReference>
<dbReference type="GO" id="GO:0000045">
    <property type="term" value="P:autophagosome assembly"/>
    <property type="evidence" value="ECO:0000318"/>
    <property type="project" value="GO_Central"/>
</dbReference>
<dbReference type="GO" id="GO:0016236">
    <property type="term" value="P:macroautophagy"/>
    <property type="evidence" value="ECO:0000315"/>
    <property type="project" value="PomBase"/>
</dbReference>
<dbReference type="GO" id="GO:0000423">
    <property type="term" value="P:mitophagy"/>
    <property type="evidence" value="ECO:0000315"/>
    <property type="project" value="PomBase"/>
</dbReference>
<dbReference type="GO" id="GO:0032446">
    <property type="term" value="P:protein modification by small protein conjugation"/>
    <property type="evidence" value="ECO:0000318"/>
    <property type="project" value="GO_Central"/>
</dbReference>
<dbReference type="GO" id="GO:0015031">
    <property type="term" value="P:protein transport"/>
    <property type="evidence" value="ECO:0007669"/>
    <property type="project" value="UniProtKB-KW"/>
</dbReference>
<dbReference type="Gene3D" id="3.30.1460.50">
    <property type="match status" value="1"/>
</dbReference>
<dbReference type="InterPro" id="IPR007135">
    <property type="entry name" value="Atg3/Atg10"/>
</dbReference>
<dbReference type="PANTHER" id="PTHR14957">
    <property type="entry name" value="UBIQUITIN-LIKE-CONJUGATING ENZYME ATG10"/>
    <property type="match status" value="1"/>
</dbReference>
<dbReference type="PANTHER" id="PTHR14957:SF1">
    <property type="entry name" value="UBIQUITIN-LIKE-CONJUGATING ENZYME ATG10"/>
    <property type="match status" value="1"/>
</dbReference>
<dbReference type="Pfam" id="PF03987">
    <property type="entry name" value="Autophagy_act_C"/>
    <property type="match status" value="1"/>
</dbReference>
<reference key="1">
    <citation type="journal article" date="2002" name="Nature">
        <title>The genome sequence of Schizosaccharomyces pombe.</title>
        <authorList>
            <person name="Wood V."/>
            <person name="Gwilliam R."/>
            <person name="Rajandream M.A."/>
            <person name="Lyne M.H."/>
            <person name="Lyne R."/>
            <person name="Stewart A."/>
            <person name="Sgouros J.G."/>
            <person name="Peat N."/>
            <person name="Hayles J."/>
            <person name="Baker S.G."/>
            <person name="Basham D."/>
            <person name="Bowman S."/>
            <person name="Brooks K."/>
            <person name="Brown D."/>
            <person name="Brown S."/>
            <person name="Chillingworth T."/>
            <person name="Churcher C.M."/>
            <person name="Collins M."/>
            <person name="Connor R."/>
            <person name="Cronin A."/>
            <person name="Davis P."/>
            <person name="Feltwell T."/>
            <person name="Fraser A."/>
            <person name="Gentles S."/>
            <person name="Goble A."/>
            <person name="Hamlin N."/>
            <person name="Harris D.E."/>
            <person name="Hidalgo J."/>
            <person name="Hodgson G."/>
            <person name="Holroyd S."/>
            <person name="Hornsby T."/>
            <person name="Howarth S."/>
            <person name="Huckle E.J."/>
            <person name="Hunt S."/>
            <person name="Jagels K."/>
            <person name="James K.D."/>
            <person name="Jones L."/>
            <person name="Jones M."/>
            <person name="Leather S."/>
            <person name="McDonald S."/>
            <person name="McLean J."/>
            <person name="Mooney P."/>
            <person name="Moule S."/>
            <person name="Mungall K.L."/>
            <person name="Murphy L.D."/>
            <person name="Niblett D."/>
            <person name="Odell C."/>
            <person name="Oliver K."/>
            <person name="O'Neil S."/>
            <person name="Pearson D."/>
            <person name="Quail M.A."/>
            <person name="Rabbinowitsch E."/>
            <person name="Rutherford K.M."/>
            <person name="Rutter S."/>
            <person name="Saunders D."/>
            <person name="Seeger K."/>
            <person name="Sharp S."/>
            <person name="Skelton J."/>
            <person name="Simmonds M.N."/>
            <person name="Squares R."/>
            <person name="Squares S."/>
            <person name="Stevens K."/>
            <person name="Taylor K."/>
            <person name="Taylor R.G."/>
            <person name="Tivey A."/>
            <person name="Walsh S.V."/>
            <person name="Warren T."/>
            <person name="Whitehead S."/>
            <person name="Woodward J.R."/>
            <person name="Volckaert G."/>
            <person name="Aert R."/>
            <person name="Robben J."/>
            <person name="Grymonprez B."/>
            <person name="Weltjens I."/>
            <person name="Vanstreels E."/>
            <person name="Rieger M."/>
            <person name="Schaefer M."/>
            <person name="Mueller-Auer S."/>
            <person name="Gabel C."/>
            <person name="Fuchs M."/>
            <person name="Duesterhoeft A."/>
            <person name="Fritzc C."/>
            <person name="Holzer E."/>
            <person name="Moestl D."/>
            <person name="Hilbert H."/>
            <person name="Borzym K."/>
            <person name="Langer I."/>
            <person name="Beck A."/>
            <person name="Lehrach H."/>
            <person name="Reinhardt R."/>
            <person name="Pohl T.M."/>
            <person name="Eger P."/>
            <person name="Zimmermann W."/>
            <person name="Wedler H."/>
            <person name="Wambutt R."/>
            <person name="Purnelle B."/>
            <person name="Goffeau A."/>
            <person name="Cadieu E."/>
            <person name="Dreano S."/>
            <person name="Gloux S."/>
            <person name="Lelaure V."/>
            <person name="Mottier S."/>
            <person name="Galibert F."/>
            <person name="Aves S.J."/>
            <person name="Xiang Z."/>
            <person name="Hunt C."/>
            <person name="Moore K."/>
            <person name="Hurst S.M."/>
            <person name="Lucas M."/>
            <person name="Rochet M."/>
            <person name="Gaillardin C."/>
            <person name="Tallada V.A."/>
            <person name="Garzon A."/>
            <person name="Thode G."/>
            <person name="Daga R.R."/>
            <person name="Cruzado L."/>
            <person name="Jimenez J."/>
            <person name="Sanchez M."/>
            <person name="del Rey F."/>
            <person name="Benito J."/>
            <person name="Dominguez A."/>
            <person name="Revuelta J.L."/>
            <person name="Moreno S."/>
            <person name="Armstrong J."/>
            <person name="Forsburg S.L."/>
            <person name="Cerutti L."/>
            <person name="Lowe T."/>
            <person name="McCombie W.R."/>
            <person name="Paulsen I."/>
            <person name="Potashkin J."/>
            <person name="Shpakovski G.V."/>
            <person name="Ussery D."/>
            <person name="Barrell B.G."/>
            <person name="Nurse P."/>
        </authorList>
    </citation>
    <scope>NUCLEOTIDE SEQUENCE [LARGE SCALE GENOMIC DNA]</scope>
    <source>
        <strain>972 / ATCC 24843</strain>
    </source>
</reference>
<reference key="2">
    <citation type="journal article" date="2006" name="Nat. Biotechnol.">
        <title>ORFeome cloning and global analysis of protein localization in the fission yeast Schizosaccharomyces pombe.</title>
        <authorList>
            <person name="Matsuyama A."/>
            <person name="Arai R."/>
            <person name="Yashiroda Y."/>
            <person name="Shirai A."/>
            <person name="Kamata A."/>
            <person name="Sekido S."/>
            <person name="Kobayashi Y."/>
            <person name="Hashimoto A."/>
            <person name="Hamamoto M."/>
            <person name="Hiraoka Y."/>
            <person name="Horinouchi S."/>
            <person name="Yoshida M."/>
        </authorList>
    </citation>
    <scope>SUBCELLULAR LOCATION [LARGE SCALE ANALYSIS]</scope>
</reference>
<reference key="3">
    <citation type="journal article" date="2013" name="Cell Cycle">
        <title>An Atg10-like E2 enzyme is essential for cell cycle progression but not autophagy in Schizosaccharomyces pombe.</title>
        <authorList>
            <person name="Flanagan M.D."/>
            <person name="Whitehall S.K."/>
            <person name="Morgan B.A."/>
        </authorList>
    </citation>
    <scope>IDENTIFICATION</scope>
    <scope>FUNCTION</scope>
</reference>
<reference key="4">
    <citation type="journal article" date="2013" name="PLoS Genet.">
        <title>Global analysis of fission yeast mating genes reveals new autophagy factors.</title>
        <authorList>
            <person name="Sun L.L."/>
            <person name="Li M."/>
            <person name="Suo F."/>
            <person name="Liu X.M."/>
            <person name="Shen E.Z."/>
            <person name="Yang B."/>
            <person name="Dong M.Q."/>
            <person name="He W.Z."/>
            <person name="Du L.L."/>
        </authorList>
    </citation>
    <scope>IDENTIFICATION</scope>
    <scope>FUNCTION</scope>
</reference>
<protein>
    <recommendedName>
        <fullName>Ubiquitin-like-conjugating enzyme ATG10</fullName>
        <ecNumber>2.3.2.-</ecNumber>
    </recommendedName>
    <alternativeName>
        <fullName>Autophagy-related protein 10</fullName>
    </alternativeName>
</protein>
<evidence type="ECO:0000250" key="1"/>
<evidence type="ECO:0000269" key="2">
    <source>
    </source>
</evidence>
<evidence type="ECO:0000269" key="3">
    <source>
    </source>
</evidence>
<evidence type="ECO:0000269" key="4">
    <source>
    </source>
</evidence>
<evidence type="ECO:0000305" key="5"/>
<name>ATG10_SCHPO</name>
<feature type="chain" id="PRO_0000310849" description="Ubiquitin-like-conjugating enzyme ATG10">
    <location>
        <begin position="1"/>
        <end position="179"/>
    </location>
</feature>
<feature type="active site" description="Glycyl thioester intermediate" evidence="1">
    <location>
        <position position="132"/>
    </location>
</feature>
<gene>
    <name type="primary">ATG10</name>
    <name type="ORF">SPAC227.04</name>
</gene>
<organism>
    <name type="scientific">Schizosaccharomyces pombe (strain 972 / ATCC 24843)</name>
    <name type="common">Fission yeast</name>
    <dbReference type="NCBI Taxonomy" id="284812"/>
    <lineage>
        <taxon>Eukaryota</taxon>
        <taxon>Fungi</taxon>
        <taxon>Dikarya</taxon>
        <taxon>Ascomycota</taxon>
        <taxon>Taphrinomycotina</taxon>
        <taxon>Schizosaccharomycetes</taxon>
        <taxon>Schizosaccharomycetales</taxon>
        <taxon>Schizosaccharomycetaceae</taxon>
        <taxon>Schizosaccharomyces</taxon>
    </lineage>
</organism>
<keyword id="KW-0072">Autophagy</keyword>
<keyword id="KW-0963">Cytoplasm</keyword>
<keyword id="KW-0472">Membrane</keyword>
<keyword id="KW-0539">Nucleus</keyword>
<keyword id="KW-0653">Protein transport</keyword>
<keyword id="KW-1185">Reference proteome</keyword>
<keyword id="KW-0808">Transferase</keyword>
<keyword id="KW-0813">Transport</keyword>
<keyword id="KW-0833">Ubl conjugation pathway</keyword>
<accession>Q9UTD5</accession>
<sequence length="179" mass="20626">MSFKSQLLILAQKLSKGGISCELIEFDECILKLEWHTELLDKNDSLLYEQEEDDILSLMNPMITMHAWIRDSPSFEVPQFFFQPYANGSDPLTKMEQIFELLEGSSQNLAYDALAIGDCPGTVGIAWYIHPCRTRDYFEMLQIDKEDPKYLSLWLLYIHQVLSPLTQPIIKAVDDAEKS</sequence>